<sequence length="285" mass="31381">MAGLGHPSAFGRATHAVVRAPPESLCRHALRRSQGEEVDFARAERQHELYVGVLGSKLGLQVVQLPADESLPDCVFVEDVAVVCEETALITRPGAPSRRKEVDMMKEALEKLQLNIVEMKDENATLDGGDVLFTGREFFVGLSKRTNQRGAEILADTFKDYAVSTVPVADSLHLKSFCSMAGPNLIAIGSSESAQKALKIMQQMSDHRYDKLTVPDDMAANCIYLNIPSKGHVLLHRTPEEYPESAKVYEKLKDHLLIPVSNSEMEKVDGLLTCCSVFINKKIDS</sequence>
<organism>
    <name type="scientific">Mus musculus</name>
    <name type="common">Mouse</name>
    <dbReference type="NCBI Taxonomy" id="10090"/>
    <lineage>
        <taxon>Eukaryota</taxon>
        <taxon>Metazoa</taxon>
        <taxon>Chordata</taxon>
        <taxon>Craniata</taxon>
        <taxon>Vertebrata</taxon>
        <taxon>Euteleostomi</taxon>
        <taxon>Mammalia</taxon>
        <taxon>Eutheria</taxon>
        <taxon>Euarchontoglires</taxon>
        <taxon>Glires</taxon>
        <taxon>Rodentia</taxon>
        <taxon>Myomorpha</taxon>
        <taxon>Muroidea</taxon>
        <taxon>Muridae</taxon>
        <taxon>Murinae</taxon>
        <taxon>Mus</taxon>
        <taxon>Mus</taxon>
    </lineage>
</organism>
<evidence type="ECO:0000250" key="1"/>
<evidence type="ECO:0000250" key="2">
    <source>
        <dbReference type="UniProtKB" id="O08557"/>
    </source>
</evidence>
<evidence type="ECO:0000250" key="3">
    <source>
        <dbReference type="UniProtKB" id="P56965"/>
    </source>
</evidence>
<evidence type="ECO:0000269" key="4">
    <source>
    </source>
</evidence>
<evidence type="ECO:0000269" key="5">
    <source>
    </source>
</evidence>
<evidence type="ECO:0000269" key="6">
    <source>
    </source>
</evidence>
<evidence type="ECO:0000305" key="7"/>
<gene>
    <name type="primary">Ddah1</name>
</gene>
<proteinExistence type="evidence at protein level"/>
<name>DDAH1_MOUSE</name>
<accession>Q9CWS0</accession>
<accession>Q3UF65</accession>
<protein>
    <recommendedName>
        <fullName evidence="7">N(G),N(G)-dimethylarginine dimethylaminohydrolase 1</fullName>
        <shortName>DDAH-1</shortName>
        <shortName>Dimethylarginine dimethylaminohydrolase 1</shortName>
        <ecNumber evidence="4 5 6">3.5.3.18</ecNumber>
    </recommendedName>
    <alternativeName>
        <fullName>DDAHI</fullName>
    </alternativeName>
    <alternativeName>
        <fullName>Dimethylargininase-1</fullName>
    </alternativeName>
</protein>
<comment type="function">
    <text evidence="4 5 6">Hydrolyzes N(G),N(G)-dimethyl-L-arginine (ADMA) and N(G)-monomethyl-L-arginine (MMA) which act as inhibitors of NOS. Has therefore a role in the regulation of nitric oxide generation.</text>
</comment>
<comment type="catalytic activity">
    <reaction evidence="4 5 6">
        <text>N(omega),N(omega)-dimethyl-L-arginine + H2O = dimethylamine + L-citrulline</text>
        <dbReference type="Rhea" id="RHEA:17305"/>
        <dbReference type="ChEBI" id="CHEBI:15377"/>
        <dbReference type="ChEBI" id="CHEBI:57743"/>
        <dbReference type="ChEBI" id="CHEBI:58040"/>
        <dbReference type="ChEBI" id="CHEBI:58326"/>
        <dbReference type="EC" id="3.5.3.18"/>
    </reaction>
    <physiologicalReaction direction="left-to-right" evidence="4 5 6">
        <dbReference type="Rhea" id="RHEA:17306"/>
    </physiologicalReaction>
</comment>
<comment type="catalytic activity">
    <reaction evidence="5">
        <text>N(omega)-methyl-L-arginine + H2O = L-citrulline + methylamine</text>
        <dbReference type="Rhea" id="RHEA:25173"/>
        <dbReference type="ChEBI" id="CHEBI:15377"/>
        <dbReference type="ChEBI" id="CHEBI:57743"/>
        <dbReference type="ChEBI" id="CHEBI:59338"/>
        <dbReference type="ChEBI" id="CHEBI:114953"/>
        <dbReference type="EC" id="3.5.3.18"/>
    </reaction>
    <physiologicalReaction direction="left-to-right" evidence="5">
        <dbReference type="Rhea" id="RHEA:25174"/>
    </physiologicalReaction>
</comment>
<comment type="activity regulation">
    <text evidence="1">Inhibited by zinc ions.</text>
</comment>
<comment type="subunit">
    <text evidence="1">Monomer.</text>
</comment>
<comment type="tissue specificity">
    <text evidence="4 5">Detected in skeletal muscle, lung, heart, liver, kidney and brain (at protein level).</text>
</comment>
<comment type="disruption phenotype">
    <text evidence="4 5 6">Mutants from some strains grow and develop normally (PubMed:21493890, PubMed:37296100). Mutant tissues do not show any dimethylarginine dimethylaminohydrolase activity. They have higher than normal tissue levels and plasma levels of asymmetric dimethylarginine (ADMA) and N(G)-monomethyl-L-arginine (MMA). They also have decreased nitric oxide porduction and increased blood pressure. They do not show differences in the structure of the kidney, lung or heart (PubMed:21493890, PubMed:37296100). Death at embryonic stages have been shown in other strains. Heterozygous mice show no visible phenotype, but have higher than normal tissue and plasma levels of asymmetric dimethylarginine (ADMA). They have increased mean arterial blood pressure and systemic vascular resistance, and decreased cardiac output and heart rate, probably due to reduced levels of nitric oxide (NO) (PubMed:17273169).</text>
</comment>
<comment type="similarity">
    <text evidence="7">Belongs to the DDAH family.</text>
</comment>
<keyword id="KW-0007">Acetylation</keyword>
<keyword id="KW-0903">Direct protein sequencing</keyword>
<keyword id="KW-0378">Hydrolase</keyword>
<keyword id="KW-0479">Metal-binding</keyword>
<keyword id="KW-0597">Phosphoprotein</keyword>
<keyword id="KW-1185">Reference proteome</keyword>
<keyword id="KW-0702">S-nitrosylation</keyword>
<keyword id="KW-0862">Zinc</keyword>
<feature type="initiator methionine" description="Removed" evidence="3">
    <location>
        <position position="1"/>
    </location>
</feature>
<feature type="chain" id="PRO_0000171119" description="N(G),N(G)-dimethylarginine dimethylaminohydrolase 1">
    <location>
        <begin position="2"/>
        <end position="285"/>
    </location>
</feature>
<feature type="active site" description="Proton donor" evidence="1">
    <location>
        <position position="173"/>
    </location>
</feature>
<feature type="active site" description="Nucleophile" evidence="1">
    <location>
        <position position="274"/>
    </location>
</feature>
<feature type="binding site" evidence="1">
    <location>
        <position position="30"/>
    </location>
    <ligand>
        <name>substrate</name>
    </ligand>
</feature>
<feature type="binding site" evidence="1">
    <location>
        <position position="73"/>
    </location>
    <ligand>
        <name>substrate</name>
    </ligand>
</feature>
<feature type="binding site" evidence="1">
    <location>
        <position position="78"/>
    </location>
    <ligand>
        <name>substrate</name>
    </ligand>
</feature>
<feature type="binding site" evidence="1">
    <location>
        <position position="79"/>
    </location>
    <ligand>
        <name>substrate</name>
    </ligand>
</feature>
<feature type="binding site" evidence="1">
    <location>
        <position position="98"/>
    </location>
    <ligand>
        <name>substrate</name>
    </ligand>
</feature>
<feature type="binding site" evidence="1">
    <location>
        <position position="145"/>
    </location>
    <ligand>
        <name>substrate</name>
    </ligand>
</feature>
<feature type="binding site" evidence="1">
    <location>
        <position position="268"/>
    </location>
    <ligand>
        <name>substrate</name>
    </ligand>
</feature>
<feature type="binding site" evidence="1">
    <location>
        <position position="274"/>
    </location>
    <ligand>
        <name>Zn(2+)</name>
        <dbReference type="ChEBI" id="CHEBI:29105"/>
    </ligand>
</feature>
<feature type="modified residue" description="N-acetylalanine" evidence="3">
    <location>
        <position position="2"/>
    </location>
</feature>
<feature type="modified residue" description="Phosphoserine" evidence="2">
    <location>
        <position position="33"/>
    </location>
</feature>
<feature type="modified residue" description="S-nitrosocysteine" evidence="3">
    <location>
        <position position="222"/>
    </location>
</feature>
<feature type="modified residue" description="S-nitrosocysteine" evidence="3">
    <location>
        <position position="274"/>
    </location>
</feature>
<reference key="1">
    <citation type="journal article" date="2005" name="Science">
        <title>The transcriptional landscape of the mammalian genome.</title>
        <authorList>
            <person name="Carninci P."/>
            <person name="Kasukawa T."/>
            <person name="Katayama S."/>
            <person name="Gough J."/>
            <person name="Frith M.C."/>
            <person name="Maeda N."/>
            <person name="Oyama R."/>
            <person name="Ravasi T."/>
            <person name="Lenhard B."/>
            <person name="Wells C."/>
            <person name="Kodzius R."/>
            <person name="Shimokawa K."/>
            <person name="Bajic V.B."/>
            <person name="Brenner S.E."/>
            <person name="Batalov S."/>
            <person name="Forrest A.R."/>
            <person name="Zavolan M."/>
            <person name="Davis M.J."/>
            <person name="Wilming L.G."/>
            <person name="Aidinis V."/>
            <person name="Allen J.E."/>
            <person name="Ambesi-Impiombato A."/>
            <person name="Apweiler R."/>
            <person name="Aturaliya R.N."/>
            <person name="Bailey T.L."/>
            <person name="Bansal M."/>
            <person name="Baxter L."/>
            <person name="Beisel K.W."/>
            <person name="Bersano T."/>
            <person name="Bono H."/>
            <person name="Chalk A.M."/>
            <person name="Chiu K.P."/>
            <person name="Choudhary V."/>
            <person name="Christoffels A."/>
            <person name="Clutterbuck D.R."/>
            <person name="Crowe M.L."/>
            <person name="Dalla E."/>
            <person name="Dalrymple B.P."/>
            <person name="de Bono B."/>
            <person name="Della Gatta G."/>
            <person name="di Bernardo D."/>
            <person name="Down T."/>
            <person name="Engstrom P."/>
            <person name="Fagiolini M."/>
            <person name="Faulkner G."/>
            <person name="Fletcher C.F."/>
            <person name="Fukushima T."/>
            <person name="Furuno M."/>
            <person name="Futaki S."/>
            <person name="Gariboldi M."/>
            <person name="Georgii-Hemming P."/>
            <person name="Gingeras T.R."/>
            <person name="Gojobori T."/>
            <person name="Green R.E."/>
            <person name="Gustincich S."/>
            <person name="Harbers M."/>
            <person name="Hayashi Y."/>
            <person name="Hensch T.K."/>
            <person name="Hirokawa N."/>
            <person name="Hill D."/>
            <person name="Huminiecki L."/>
            <person name="Iacono M."/>
            <person name="Ikeo K."/>
            <person name="Iwama A."/>
            <person name="Ishikawa T."/>
            <person name="Jakt M."/>
            <person name="Kanapin A."/>
            <person name="Katoh M."/>
            <person name="Kawasawa Y."/>
            <person name="Kelso J."/>
            <person name="Kitamura H."/>
            <person name="Kitano H."/>
            <person name="Kollias G."/>
            <person name="Krishnan S.P."/>
            <person name="Kruger A."/>
            <person name="Kummerfeld S.K."/>
            <person name="Kurochkin I.V."/>
            <person name="Lareau L.F."/>
            <person name="Lazarevic D."/>
            <person name="Lipovich L."/>
            <person name="Liu J."/>
            <person name="Liuni S."/>
            <person name="McWilliam S."/>
            <person name="Madan Babu M."/>
            <person name="Madera M."/>
            <person name="Marchionni L."/>
            <person name="Matsuda H."/>
            <person name="Matsuzawa S."/>
            <person name="Miki H."/>
            <person name="Mignone F."/>
            <person name="Miyake S."/>
            <person name="Morris K."/>
            <person name="Mottagui-Tabar S."/>
            <person name="Mulder N."/>
            <person name="Nakano N."/>
            <person name="Nakauchi H."/>
            <person name="Ng P."/>
            <person name="Nilsson R."/>
            <person name="Nishiguchi S."/>
            <person name="Nishikawa S."/>
            <person name="Nori F."/>
            <person name="Ohara O."/>
            <person name="Okazaki Y."/>
            <person name="Orlando V."/>
            <person name="Pang K.C."/>
            <person name="Pavan W.J."/>
            <person name="Pavesi G."/>
            <person name="Pesole G."/>
            <person name="Petrovsky N."/>
            <person name="Piazza S."/>
            <person name="Reed J."/>
            <person name="Reid J.F."/>
            <person name="Ring B.Z."/>
            <person name="Ringwald M."/>
            <person name="Rost B."/>
            <person name="Ruan Y."/>
            <person name="Salzberg S.L."/>
            <person name="Sandelin A."/>
            <person name="Schneider C."/>
            <person name="Schoenbach C."/>
            <person name="Sekiguchi K."/>
            <person name="Semple C.A."/>
            <person name="Seno S."/>
            <person name="Sessa L."/>
            <person name="Sheng Y."/>
            <person name="Shibata Y."/>
            <person name="Shimada H."/>
            <person name="Shimada K."/>
            <person name="Silva D."/>
            <person name="Sinclair B."/>
            <person name="Sperling S."/>
            <person name="Stupka E."/>
            <person name="Sugiura K."/>
            <person name="Sultana R."/>
            <person name="Takenaka Y."/>
            <person name="Taki K."/>
            <person name="Tammoja K."/>
            <person name="Tan S.L."/>
            <person name="Tang S."/>
            <person name="Taylor M.S."/>
            <person name="Tegner J."/>
            <person name="Teichmann S.A."/>
            <person name="Ueda H.R."/>
            <person name="van Nimwegen E."/>
            <person name="Verardo R."/>
            <person name="Wei C.L."/>
            <person name="Yagi K."/>
            <person name="Yamanishi H."/>
            <person name="Zabarovsky E."/>
            <person name="Zhu S."/>
            <person name="Zimmer A."/>
            <person name="Hide W."/>
            <person name="Bult C."/>
            <person name="Grimmond S.M."/>
            <person name="Teasdale R.D."/>
            <person name="Liu E.T."/>
            <person name="Brusic V."/>
            <person name="Quackenbush J."/>
            <person name="Wahlestedt C."/>
            <person name="Mattick J.S."/>
            <person name="Hume D.A."/>
            <person name="Kai C."/>
            <person name="Sasaki D."/>
            <person name="Tomaru Y."/>
            <person name="Fukuda S."/>
            <person name="Kanamori-Katayama M."/>
            <person name="Suzuki M."/>
            <person name="Aoki J."/>
            <person name="Arakawa T."/>
            <person name="Iida J."/>
            <person name="Imamura K."/>
            <person name="Itoh M."/>
            <person name="Kato T."/>
            <person name="Kawaji H."/>
            <person name="Kawagashira N."/>
            <person name="Kawashima T."/>
            <person name="Kojima M."/>
            <person name="Kondo S."/>
            <person name="Konno H."/>
            <person name="Nakano K."/>
            <person name="Ninomiya N."/>
            <person name="Nishio T."/>
            <person name="Okada M."/>
            <person name="Plessy C."/>
            <person name="Shibata K."/>
            <person name="Shiraki T."/>
            <person name="Suzuki S."/>
            <person name="Tagami M."/>
            <person name="Waki K."/>
            <person name="Watahiki A."/>
            <person name="Okamura-Oho Y."/>
            <person name="Suzuki H."/>
            <person name="Kawai J."/>
            <person name="Hayashizaki Y."/>
        </authorList>
    </citation>
    <scope>NUCLEOTIDE SEQUENCE [LARGE SCALE MRNA]</scope>
    <source>
        <strain>C57BL/6J</strain>
        <tissue>Embryonic stem cell</tissue>
        <tissue>Sympathetic ganglion</tissue>
    </source>
</reference>
<reference key="2">
    <citation type="journal article" date="2004" name="Genome Res.">
        <title>The status, quality, and expansion of the NIH full-length cDNA project: the Mammalian Gene Collection (MGC).</title>
        <authorList>
            <consortium name="The MGC Project Team"/>
        </authorList>
    </citation>
    <scope>NUCLEOTIDE SEQUENCE [LARGE SCALE MRNA]</scope>
    <source>
        <tissue>Liver</tissue>
    </source>
</reference>
<reference key="3">
    <citation type="submission" date="2007-04" db="UniProtKB">
        <authorList>
            <person name="Lubec G."/>
            <person name="Klug S."/>
            <person name="Kang S.U."/>
        </authorList>
    </citation>
    <scope>PROTEIN SEQUENCE OF 33-42; 121-136; 160-175; 212-230; 238-247 AND 268-281</scope>
    <scope>IDENTIFICATION BY MASS SPECTROMETRY</scope>
    <source>
        <strain>C57BL/6J</strain>
        <tissue>Brain</tissue>
        <tissue>Hippocampus</tissue>
    </source>
</reference>
<reference key="4">
    <citation type="journal article" date="2007" name="Nat. Med.">
        <title>Disruption of methylarginine metabolism impairs vascular homeostasis.</title>
        <authorList>
            <person name="Leiper J."/>
            <person name="Nandi M."/>
            <person name="Torondel B."/>
            <person name="Murray-Rust J."/>
            <person name="Malaki M."/>
            <person name="O'Hara B."/>
            <person name="Rossiter S."/>
            <person name="Anthony S."/>
            <person name="Madhani M."/>
            <person name="Selwood D."/>
            <person name="Smith C."/>
            <person name="Wojciak-Stothard B."/>
            <person name="Rudiger A."/>
            <person name="Stidwill R."/>
            <person name="McDonald N.Q."/>
            <person name="Vallance P."/>
        </authorList>
    </citation>
    <scope>DISRUPTION PHENOTYPE</scope>
    <scope>FUNCTION</scope>
    <scope>TISSUE SPECIFICITY</scope>
    <scope>CATALYTIC ACTIVITY</scope>
</reference>
<reference key="5">
    <citation type="journal article" date="2010" name="Cell">
        <title>A tissue-specific atlas of mouse protein phosphorylation and expression.</title>
        <authorList>
            <person name="Huttlin E.L."/>
            <person name="Jedrychowski M.P."/>
            <person name="Elias J.E."/>
            <person name="Goswami T."/>
            <person name="Rad R."/>
            <person name="Beausoleil S.A."/>
            <person name="Villen J."/>
            <person name="Haas W."/>
            <person name="Sowa M.E."/>
            <person name="Gygi S.P."/>
        </authorList>
    </citation>
    <scope>IDENTIFICATION BY MASS SPECTROMETRY [LARGE SCALE ANALYSIS]</scope>
    <source>
        <tissue>Brain</tissue>
        <tissue>Heart</tissue>
        <tissue>Kidney</tissue>
        <tissue>Liver</tissue>
        <tissue>Lung</tissue>
        <tissue>Testis</tissue>
    </source>
</reference>
<reference key="6">
    <citation type="journal article" date="2011" name="Arterioscler. Thromb. Vasc. Biol.">
        <title>Dimethylarginine dimethylaminohydrolase-1 is the critical enzyme for degrading the cardiovascular risk factor asymmetrical dimethylarginine.</title>
        <authorList>
            <person name="Hu X."/>
            <person name="Atzler D."/>
            <person name="Xu X."/>
            <person name="Zhang P."/>
            <person name="Guo H."/>
            <person name="Lu Z."/>
            <person name="Fassett J."/>
            <person name="Schwedhelm E."/>
            <person name="Boeger R.H."/>
            <person name="Bache R.J."/>
            <person name="Chen Y."/>
        </authorList>
    </citation>
    <scope>FUNCTION</scope>
    <scope>DISRUPTION PHENOTYPE</scope>
    <scope>TISSUE SPECIFICITY</scope>
</reference>
<reference key="7">
    <citation type="journal article" date="2023" name="Nat. Commun.">
        <title>A multicentric consortium study demonstrates that dimethylarginine dimethylaminohydrolase 2 is not a dimethylarginine dimethylaminohydrolase.</title>
        <authorList>
            <person name="Ragavan V.N."/>
            <person name="Nair P.C."/>
            <person name="Jarzebska N."/>
            <person name="Angom R.S."/>
            <person name="Ruta L."/>
            <person name="Bianconi E."/>
            <person name="Grottelli S."/>
            <person name="Tararova N.D."/>
            <person name="Ryazanskiy D."/>
            <person name="Lentz S.R."/>
            <person name="Tommasi S."/>
            <person name="Martens-Lobenhoffer J."/>
            <person name="Suzuki-Yamamoto T."/>
            <person name="Kimoto M."/>
            <person name="Rubets E."/>
            <person name="Chau S."/>
            <person name="Chen Y."/>
            <person name="Hu X."/>
            <person name="Bernhardt N."/>
            <person name="Spieth P.M."/>
            <person name="Weiss N."/>
            <person name="Bornstein S.R."/>
            <person name="Mukhopadhyay D."/>
            <person name="Bode-Boeger S.M."/>
            <person name="Maas R."/>
            <person name="Wang Y."/>
            <person name="Macchiarulo A."/>
            <person name="Mangoni A.A."/>
            <person name="Cellini B."/>
            <person name="Rodionov R.N."/>
        </authorList>
    </citation>
    <scope>FUNCTION</scope>
    <scope>DISRUPTION PHENOTYPE</scope>
</reference>
<dbReference type="EC" id="3.5.3.18" evidence="4 5 6"/>
<dbReference type="EMBL" id="AK010430">
    <property type="protein sequence ID" value="BAB26932.1"/>
    <property type="molecule type" value="mRNA"/>
</dbReference>
<dbReference type="EMBL" id="AK143507">
    <property type="protein sequence ID" value="BAE25405.1"/>
    <property type="molecule type" value="mRNA"/>
</dbReference>
<dbReference type="EMBL" id="AK148907">
    <property type="protein sequence ID" value="BAE28696.1"/>
    <property type="molecule type" value="mRNA"/>
</dbReference>
<dbReference type="EMBL" id="BC034505">
    <property type="protein sequence ID" value="AAH34505.1"/>
    <property type="molecule type" value="mRNA"/>
</dbReference>
<dbReference type="CCDS" id="CCDS17896.1"/>
<dbReference type="RefSeq" id="NP_081269.1">
    <property type="nucleotide sequence ID" value="NM_026993.3"/>
</dbReference>
<dbReference type="SMR" id="Q9CWS0"/>
<dbReference type="BioGRID" id="213300">
    <property type="interactions" value="4"/>
</dbReference>
<dbReference type="FunCoup" id="Q9CWS0">
    <property type="interactions" value="907"/>
</dbReference>
<dbReference type="IntAct" id="Q9CWS0">
    <property type="interactions" value="3"/>
</dbReference>
<dbReference type="MINT" id="Q9CWS0"/>
<dbReference type="STRING" id="10090.ENSMUSP00000029845"/>
<dbReference type="ChEMBL" id="CHEMBL3988621"/>
<dbReference type="GlyGen" id="Q9CWS0">
    <property type="glycosylation" value="2 sites, 1 O-linked glycan (2 sites)"/>
</dbReference>
<dbReference type="iPTMnet" id="Q9CWS0"/>
<dbReference type="PhosphoSitePlus" id="Q9CWS0"/>
<dbReference type="SwissPalm" id="Q9CWS0"/>
<dbReference type="REPRODUCTION-2DPAGE" id="Q9CWS0"/>
<dbReference type="CPTAC" id="non-CPTAC-3418"/>
<dbReference type="jPOST" id="Q9CWS0"/>
<dbReference type="PaxDb" id="10090-ENSMUSP00000029845"/>
<dbReference type="PeptideAtlas" id="Q9CWS0"/>
<dbReference type="ProteomicsDB" id="279842"/>
<dbReference type="Pumba" id="Q9CWS0"/>
<dbReference type="Antibodypedia" id="1588">
    <property type="antibodies" value="308 antibodies from 35 providers"/>
</dbReference>
<dbReference type="DNASU" id="69219"/>
<dbReference type="Ensembl" id="ENSMUST00000029845.15">
    <property type="protein sequence ID" value="ENSMUSP00000029845.9"/>
    <property type="gene ID" value="ENSMUSG00000028194.16"/>
</dbReference>
<dbReference type="GeneID" id="69219"/>
<dbReference type="KEGG" id="mmu:69219"/>
<dbReference type="UCSC" id="uc008rqr.2">
    <property type="organism name" value="mouse"/>
</dbReference>
<dbReference type="AGR" id="MGI:1916469"/>
<dbReference type="CTD" id="23576"/>
<dbReference type="MGI" id="MGI:1916469">
    <property type="gene designation" value="Ddah1"/>
</dbReference>
<dbReference type="VEuPathDB" id="HostDB:ENSMUSG00000028194"/>
<dbReference type="eggNOG" id="ENOG502QWPA">
    <property type="taxonomic scope" value="Eukaryota"/>
</dbReference>
<dbReference type="GeneTree" id="ENSGT00940000157892"/>
<dbReference type="HOGENOM" id="CLU_067923_0_0_1"/>
<dbReference type="InParanoid" id="Q9CWS0"/>
<dbReference type="OMA" id="GRCSHAV"/>
<dbReference type="OrthoDB" id="10016839at2759"/>
<dbReference type="PhylomeDB" id="Q9CWS0"/>
<dbReference type="TreeFam" id="TF314737"/>
<dbReference type="BRENDA" id="3.5.3.18">
    <property type="organism ID" value="3474"/>
</dbReference>
<dbReference type="Reactome" id="R-MMU-203615">
    <property type="pathway name" value="eNOS activation"/>
</dbReference>
<dbReference type="BioGRID-ORCS" id="69219">
    <property type="hits" value="1 hit in 79 CRISPR screens"/>
</dbReference>
<dbReference type="CD-CODE" id="CE726F99">
    <property type="entry name" value="Postsynaptic density"/>
</dbReference>
<dbReference type="ChiTaRS" id="Ddah1">
    <property type="organism name" value="mouse"/>
</dbReference>
<dbReference type="PRO" id="PR:Q9CWS0"/>
<dbReference type="Proteomes" id="UP000000589">
    <property type="component" value="Chromosome 3"/>
</dbReference>
<dbReference type="RNAct" id="Q9CWS0">
    <property type="molecule type" value="protein"/>
</dbReference>
<dbReference type="Bgee" id="ENSMUSG00000028194">
    <property type="expression patterns" value="Expressed in ventricular zone and 232 other cell types or tissues"/>
</dbReference>
<dbReference type="ExpressionAtlas" id="Q9CWS0">
    <property type="expression patterns" value="baseline and differential"/>
</dbReference>
<dbReference type="GO" id="GO:0005739">
    <property type="term" value="C:mitochondrion"/>
    <property type="evidence" value="ECO:0007005"/>
    <property type="project" value="MGI"/>
</dbReference>
<dbReference type="GO" id="GO:0016597">
    <property type="term" value="F:amino acid binding"/>
    <property type="evidence" value="ECO:0007669"/>
    <property type="project" value="Ensembl"/>
</dbReference>
<dbReference type="GO" id="GO:0016403">
    <property type="term" value="F:dimethylargininase activity"/>
    <property type="evidence" value="ECO:0000315"/>
    <property type="project" value="BHF-UCL"/>
</dbReference>
<dbReference type="GO" id="GO:0008270">
    <property type="term" value="F:zinc ion binding"/>
    <property type="evidence" value="ECO:0000266"/>
    <property type="project" value="MGI"/>
</dbReference>
<dbReference type="GO" id="GO:0006527">
    <property type="term" value="P:arginine catabolic process"/>
    <property type="evidence" value="ECO:0007669"/>
    <property type="project" value="Ensembl"/>
</dbReference>
<dbReference type="GO" id="GO:0000052">
    <property type="term" value="P:citrulline metabolic process"/>
    <property type="evidence" value="ECO:0000250"/>
    <property type="project" value="UniProtKB"/>
</dbReference>
<dbReference type="GO" id="GO:0008285">
    <property type="term" value="P:negative regulation of cell population proliferation"/>
    <property type="evidence" value="ECO:0007669"/>
    <property type="project" value="Ensembl"/>
</dbReference>
<dbReference type="GO" id="GO:1900038">
    <property type="term" value="P:negative regulation of cellular response to hypoxia"/>
    <property type="evidence" value="ECO:0007669"/>
    <property type="project" value="Ensembl"/>
</dbReference>
<dbReference type="GO" id="GO:0043116">
    <property type="term" value="P:negative regulation of vascular permeability"/>
    <property type="evidence" value="ECO:0007669"/>
    <property type="project" value="Ensembl"/>
</dbReference>
<dbReference type="GO" id="GO:0006809">
    <property type="term" value="P:nitric oxide biosynthetic process"/>
    <property type="evidence" value="ECO:0000266"/>
    <property type="project" value="MGI"/>
</dbReference>
<dbReference type="GO" id="GO:0045766">
    <property type="term" value="P:positive regulation of angiogenesis"/>
    <property type="evidence" value="ECO:0007669"/>
    <property type="project" value="Ensembl"/>
</dbReference>
<dbReference type="GO" id="GO:0045429">
    <property type="term" value="P:positive regulation of nitric oxide biosynthetic process"/>
    <property type="evidence" value="ECO:0000315"/>
    <property type="project" value="BHF-UCL"/>
</dbReference>
<dbReference type="GO" id="GO:0003073">
    <property type="term" value="P:regulation of systemic arterial blood pressure"/>
    <property type="evidence" value="ECO:0000315"/>
    <property type="project" value="BHF-UCL"/>
</dbReference>
<dbReference type="FunFam" id="3.75.10.10:FF:000004">
    <property type="entry name" value="N(G),N(G)-dimethylarginine dimethylaminohydrolase 1"/>
    <property type="match status" value="1"/>
</dbReference>
<dbReference type="Gene3D" id="3.75.10.10">
    <property type="entry name" value="L-arginine/glycine Amidinotransferase, Chain A"/>
    <property type="match status" value="1"/>
</dbReference>
<dbReference type="InterPro" id="IPR033199">
    <property type="entry name" value="DDAH-like"/>
</dbReference>
<dbReference type="PANTHER" id="PTHR12737">
    <property type="entry name" value="DIMETHYLARGININE DIMETHYLAMINOHYDROLASE"/>
    <property type="match status" value="1"/>
</dbReference>
<dbReference type="PANTHER" id="PTHR12737:SF17">
    <property type="entry name" value="N(G),N(G)-DIMETHYLARGININE DIMETHYLAMINOHYDROLASE 1"/>
    <property type="match status" value="1"/>
</dbReference>
<dbReference type="Pfam" id="PF19420">
    <property type="entry name" value="DDAH_eukar"/>
    <property type="match status" value="1"/>
</dbReference>
<dbReference type="SUPFAM" id="SSF55909">
    <property type="entry name" value="Pentein"/>
    <property type="match status" value="1"/>
</dbReference>